<name>Y1781_ORYSI</name>
<gene>
    <name type="ORF">OsI_031781</name>
</gene>
<organism>
    <name type="scientific">Oryza sativa subsp. indica</name>
    <name type="common">Rice</name>
    <dbReference type="NCBI Taxonomy" id="39946"/>
    <lineage>
        <taxon>Eukaryota</taxon>
        <taxon>Viridiplantae</taxon>
        <taxon>Streptophyta</taxon>
        <taxon>Embryophyta</taxon>
        <taxon>Tracheophyta</taxon>
        <taxon>Spermatophyta</taxon>
        <taxon>Magnoliopsida</taxon>
        <taxon>Liliopsida</taxon>
        <taxon>Poales</taxon>
        <taxon>Poaceae</taxon>
        <taxon>BOP clade</taxon>
        <taxon>Oryzoideae</taxon>
        <taxon>Oryzeae</taxon>
        <taxon>Oryzinae</taxon>
        <taxon>Oryza</taxon>
        <taxon>Oryza sativa</taxon>
    </lineage>
</organism>
<comment type="miscellaneous">
    <text evidence="3">On the 2D-gel the determined pI of this unknown protein is: 7.1, its MW is: 19 kDa.</text>
</comment>
<protein>
    <recommendedName>
        <fullName>Uncharacterized protein OsI_031781</fullName>
    </recommendedName>
    <alternativeName>
        <fullName>Unknown protein AN08 from 2D-PAGE of anther</fullName>
    </alternativeName>
</protein>
<reference evidence="5" key="1">
    <citation type="journal article" date="2005" name="PLoS Biol.">
        <title>The genomes of Oryza sativa: a history of duplications.</title>
        <authorList>
            <person name="Yu J."/>
            <person name="Wang J."/>
            <person name="Lin W."/>
            <person name="Li S."/>
            <person name="Li H."/>
            <person name="Zhou J."/>
            <person name="Ni P."/>
            <person name="Dong W."/>
            <person name="Hu S."/>
            <person name="Zeng C."/>
            <person name="Zhang J."/>
            <person name="Zhang Y."/>
            <person name="Li R."/>
            <person name="Xu Z."/>
            <person name="Li S."/>
            <person name="Li X."/>
            <person name="Zheng H."/>
            <person name="Cong L."/>
            <person name="Lin L."/>
            <person name="Yin J."/>
            <person name="Geng J."/>
            <person name="Li G."/>
            <person name="Shi J."/>
            <person name="Liu J."/>
            <person name="Lv H."/>
            <person name="Li J."/>
            <person name="Wang J."/>
            <person name="Deng Y."/>
            <person name="Ran L."/>
            <person name="Shi X."/>
            <person name="Wang X."/>
            <person name="Wu Q."/>
            <person name="Li C."/>
            <person name="Ren X."/>
            <person name="Wang J."/>
            <person name="Wang X."/>
            <person name="Li D."/>
            <person name="Liu D."/>
            <person name="Zhang X."/>
            <person name="Ji Z."/>
            <person name="Zhao W."/>
            <person name="Sun Y."/>
            <person name="Zhang Z."/>
            <person name="Bao J."/>
            <person name="Han Y."/>
            <person name="Dong L."/>
            <person name="Ji J."/>
            <person name="Chen P."/>
            <person name="Wu S."/>
            <person name="Liu J."/>
            <person name="Xiao Y."/>
            <person name="Bu D."/>
            <person name="Tan J."/>
            <person name="Yang L."/>
            <person name="Ye C."/>
            <person name="Zhang J."/>
            <person name="Xu J."/>
            <person name="Zhou Y."/>
            <person name="Yu Y."/>
            <person name="Zhang B."/>
            <person name="Zhuang S."/>
            <person name="Wei H."/>
            <person name="Liu B."/>
            <person name="Lei M."/>
            <person name="Yu H."/>
            <person name="Li Y."/>
            <person name="Xu H."/>
            <person name="Wei S."/>
            <person name="He X."/>
            <person name="Fang L."/>
            <person name="Zhang Z."/>
            <person name="Zhang Y."/>
            <person name="Huang X."/>
            <person name="Su Z."/>
            <person name="Tong W."/>
            <person name="Li J."/>
            <person name="Tong Z."/>
            <person name="Li S."/>
            <person name="Ye J."/>
            <person name="Wang L."/>
            <person name="Fang L."/>
            <person name="Lei T."/>
            <person name="Chen C.-S."/>
            <person name="Chen H.-C."/>
            <person name="Xu Z."/>
            <person name="Li H."/>
            <person name="Huang H."/>
            <person name="Zhang F."/>
            <person name="Xu H."/>
            <person name="Li N."/>
            <person name="Zhao C."/>
            <person name="Li S."/>
            <person name="Dong L."/>
            <person name="Huang Y."/>
            <person name="Li L."/>
            <person name="Xi Y."/>
            <person name="Qi Q."/>
            <person name="Li W."/>
            <person name="Zhang B."/>
            <person name="Hu W."/>
            <person name="Zhang Y."/>
            <person name="Tian X."/>
            <person name="Jiao Y."/>
            <person name="Liang X."/>
            <person name="Jin J."/>
            <person name="Gao L."/>
            <person name="Zheng W."/>
            <person name="Hao B."/>
            <person name="Liu S.-M."/>
            <person name="Wang W."/>
            <person name="Yuan L."/>
            <person name="Cao M."/>
            <person name="McDermott J."/>
            <person name="Samudrala R."/>
            <person name="Wang J."/>
            <person name="Wong G.K.-S."/>
            <person name="Yang H."/>
        </authorList>
    </citation>
    <scope>NUCLEOTIDE SEQUENCE [LARGE SCALE GENOMIC DNA]</scope>
    <source>
        <strain evidence="2">cv. 93-11</strain>
    </source>
</reference>
<reference evidence="4" key="2">
    <citation type="submission" date="2003-07" db="UniProtKB">
        <title>Proteome analysis of rice anther.</title>
        <authorList>
            <person name="Hosseini Salekdeh S.G."/>
            <person name="Bennett J."/>
        </authorList>
    </citation>
    <scope>PROTEIN SEQUENCE OF 49-62</scope>
    <source>
        <strain evidence="3">cv. IR64</strain>
        <tissue evidence="3">Anther</tissue>
    </source>
</reference>
<feature type="signal peptide" evidence="1">
    <location>
        <begin position="1"/>
        <end position="16"/>
    </location>
</feature>
<feature type="chain" id="PRO_0000308523" description="Uncharacterized protein OsI_031781" evidence="1">
    <location>
        <begin position="17"/>
        <end position="134"/>
    </location>
</feature>
<feature type="sequence conflict" description="In Ref. 2; AA sequence." evidence="4" ref="2">
    <original>I</original>
    <variation>L</variation>
    <location>
        <position position="50"/>
    </location>
</feature>
<accession>A2Z5D8</accession>
<accession>P83633</accession>
<keyword id="KW-0903">Direct protein sequencing</keyword>
<keyword id="KW-1185">Reference proteome</keyword>
<keyword id="KW-0732">Signal</keyword>
<proteinExistence type="evidence at protein level"/>
<dbReference type="EMBL" id="CM000135">
    <property type="protein sequence ID" value="EAY77822.1"/>
    <property type="molecule type" value="Genomic_DNA"/>
</dbReference>
<dbReference type="SMR" id="A2Z5D8"/>
<dbReference type="EnsemblPlants" id="BGIOSGA032242-TA">
    <property type="protein sequence ID" value="BGIOSGA032242-PA"/>
    <property type="gene ID" value="BGIOSGA032242"/>
</dbReference>
<dbReference type="Gramene" id="BGIOSGA032242-TA">
    <property type="protein sequence ID" value="BGIOSGA032242-PA"/>
    <property type="gene ID" value="BGIOSGA032242"/>
</dbReference>
<dbReference type="HOGENOM" id="CLU_138205_0_0_1"/>
<dbReference type="OMA" id="PESKFRM"/>
<dbReference type="Proteomes" id="UP000007015">
    <property type="component" value="Chromosome 10"/>
</dbReference>
<dbReference type="Gene3D" id="1.20.120.320">
    <property type="entry name" value="Group V grass pollen allergen"/>
    <property type="match status" value="1"/>
</dbReference>
<dbReference type="InterPro" id="IPR035506">
    <property type="entry name" value="Pollen_allergen/Os"/>
</dbReference>
<sequence>MAKAVALLLAAIAASAVLVQVECDAPVEKSFNKALLAPVDKRLDEATQAINEAADSVVAAAPPAKKDEVEAATWKRRMFAFAALGMAQGDEKKVAATSLAYKKAAKAVLDAAPADKFKLMDESFKVAAMEVIVS</sequence>
<evidence type="ECO:0000255" key="1"/>
<evidence type="ECO:0000269" key="2">
    <source>
    </source>
</evidence>
<evidence type="ECO:0000269" key="3">
    <source ref="2"/>
</evidence>
<evidence type="ECO:0000305" key="4"/>
<evidence type="ECO:0000312" key="5">
    <source>
        <dbReference type="EMBL" id="EAY77822.1"/>
    </source>
</evidence>